<keyword id="KW-0156">Chromatin regulator</keyword>
<keyword id="KW-0238">DNA-binding</keyword>
<keyword id="KW-0479">Metal-binding</keyword>
<keyword id="KW-0539">Nucleus</keyword>
<keyword id="KW-1185">Reference proteome</keyword>
<keyword id="KW-0804">Transcription</keyword>
<keyword id="KW-0805">Transcription regulation</keyword>
<keyword id="KW-0862">Zinc</keyword>
<keyword id="KW-0863">Zinc-finger</keyword>
<dbReference type="EMBL" id="EU178102">
    <property type="protein sequence ID" value="ABW34919.1"/>
    <property type="molecule type" value="mRNA"/>
</dbReference>
<dbReference type="EMBL" id="BX284602">
    <property type="protein sequence ID" value="CAA19449.1"/>
    <property type="molecule type" value="Genomic_DNA"/>
</dbReference>
<dbReference type="PIR" id="T26495">
    <property type="entry name" value="T26495"/>
</dbReference>
<dbReference type="RefSeq" id="NP_496555.1">
    <property type="nucleotide sequence ID" value="NM_064154.3"/>
</dbReference>
<dbReference type="SMR" id="G5EFZ3"/>
<dbReference type="FunCoup" id="G5EFZ3">
    <property type="interactions" value="2913"/>
</dbReference>
<dbReference type="STRING" id="6239.Y17G7B.2d.1"/>
<dbReference type="PaxDb" id="6239-Y17G7B.2b"/>
<dbReference type="PeptideAtlas" id="G5EFZ3"/>
<dbReference type="EnsemblMetazoa" id="Y17G7B.2a.1">
    <property type="protein sequence ID" value="Y17G7B.2a.1"/>
    <property type="gene ID" value="WBGene00012458"/>
</dbReference>
<dbReference type="GeneID" id="174838"/>
<dbReference type="KEGG" id="cel:CELE_Y17G7B.2"/>
<dbReference type="AGR" id="WB:WBGene00012458"/>
<dbReference type="CTD" id="174838"/>
<dbReference type="WormBase" id="Y17G7B.2a">
    <property type="protein sequence ID" value="CE19035"/>
    <property type="gene ID" value="WBGene00012458"/>
    <property type="gene designation" value="ash-2"/>
</dbReference>
<dbReference type="eggNOG" id="KOG2626">
    <property type="taxonomic scope" value="Eukaryota"/>
</dbReference>
<dbReference type="HOGENOM" id="CLU_032370_2_0_1"/>
<dbReference type="InParanoid" id="G5EFZ3"/>
<dbReference type="OrthoDB" id="515692at2759"/>
<dbReference type="Reactome" id="R-CEL-3214841">
    <property type="pathway name" value="PKMTs methylate histone lysines"/>
</dbReference>
<dbReference type="Reactome" id="R-CEL-8936459">
    <property type="pathway name" value="RUNX1 regulates genes involved in megakaryocyte differentiation and platelet function"/>
</dbReference>
<dbReference type="Reactome" id="R-CEL-9772755">
    <property type="pathway name" value="Formation of WDR5-containing histone-modifying complexes"/>
</dbReference>
<dbReference type="PRO" id="PR:G5EFZ3"/>
<dbReference type="Proteomes" id="UP000001940">
    <property type="component" value="Chromosome II"/>
</dbReference>
<dbReference type="Bgee" id="WBGene00012458">
    <property type="expression patterns" value="Expressed in embryo and 4 other cell types or tissues"/>
</dbReference>
<dbReference type="ExpressionAtlas" id="G5EFZ3">
    <property type="expression patterns" value="baseline"/>
</dbReference>
<dbReference type="GO" id="GO:0005634">
    <property type="term" value="C:nucleus"/>
    <property type="evidence" value="ECO:0000314"/>
    <property type="project" value="WormBase"/>
</dbReference>
<dbReference type="GO" id="GO:0048188">
    <property type="term" value="C:Set1C/COMPASS complex"/>
    <property type="evidence" value="ECO:0000318"/>
    <property type="project" value="GO_Central"/>
</dbReference>
<dbReference type="GO" id="GO:0000976">
    <property type="term" value="F:transcription cis-regulatory region binding"/>
    <property type="evidence" value="ECO:0000318"/>
    <property type="project" value="GO_Central"/>
</dbReference>
<dbReference type="GO" id="GO:0008270">
    <property type="term" value="F:zinc ion binding"/>
    <property type="evidence" value="ECO:0007669"/>
    <property type="project" value="UniProtKB-KW"/>
</dbReference>
<dbReference type="GO" id="GO:0006325">
    <property type="term" value="P:chromatin organization"/>
    <property type="evidence" value="ECO:0007669"/>
    <property type="project" value="UniProtKB-KW"/>
</dbReference>
<dbReference type="GO" id="GO:0008340">
    <property type="term" value="P:determination of adult lifespan"/>
    <property type="evidence" value="ECO:0000315"/>
    <property type="project" value="WormBase"/>
</dbReference>
<dbReference type="GO" id="GO:0012501">
    <property type="term" value="P:programmed cell death"/>
    <property type="evidence" value="ECO:0000315"/>
    <property type="project" value="UniProtKB"/>
</dbReference>
<dbReference type="CDD" id="cd15583">
    <property type="entry name" value="PHD_ash2p_like"/>
    <property type="match status" value="1"/>
</dbReference>
<dbReference type="CDD" id="cd12872">
    <property type="entry name" value="SPRY_Ash2"/>
    <property type="match status" value="1"/>
</dbReference>
<dbReference type="FunFam" id="3.90.980.20:FF:000010">
    <property type="entry name" value="Set1/Ash2 histone methyltransferase complex subunit ash-2"/>
    <property type="match status" value="1"/>
</dbReference>
<dbReference type="Gene3D" id="2.60.120.920">
    <property type="match status" value="1"/>
</dbReference>
<dbReference type="Gene3D" id="3.90.980.20">
    <property type="match status" value="1"/>
</dbReference>
<dbReference type="InterPro" id="IPR037353">
    <property type="entry name" value="ASH2"/>
</dbReference>
<dbReference type="InterPro" id="IPR049455">
    <property type="entry name" value="ASH2-like_PHD"/>
</dbReference>
<dbReference type="InterPro" id="IPR053835">
    <property type="entry name" value="ASH2L-like_WH"/>
</dbReference>
<dbReference type="InterPro" id="IPR001870">
    <property type="entry name" value="B30.2/SPRY"/>
</dbReference>
<dbReference type="InterPro" id="IPR043136">
    <property type="entry name" value="B30.2/SPRY_sf"/>
</dbReference>
<dbReference type="InterPro" id="IPR013320">
    <property type="entry name" value="ConA-like_dom_sf"/>
</dbReference>
<dbReference type="InterPro" id="IPR003877">
    <property type="entry name" value="SPRY_dom"/>
</dbReference>
<dbReference type="InterPro" id="IPR019786">
    <property type="entry name" value="Zinc_finger_PHD-type_CS"/>
</dbReference>
<dbReference type="InterPro" id="IPR011011">
    <property type="entry name" value="Znf_FYVE_PHD"/>
</dbReference>
<dbReference type="PANTHER" id="PTHR10598">
    <property type="entry name" value="SET1/ASH2 HISTONE METHYLTRANSFERASE COMPLEX SUBUNIT ASH2"/>
    <property type="match status" value="1"/>
</dbReference>
<dbReference type="PANTHER" id="PTHR10598:SF0">
    <property type="entry name" value="SET1_ASH2 HISTONE METHYLTRANSFERASE COMPLEX SUBUNIT ASH2"/>
    <property type="match status" value="1"/>
</dbReference>
<dbReference type="Pfam" id="PF21198">
    <property type="entry name" value="ASH2L-like_WH"/>
    <property type="match status" value="1"/>
</dbReference>
<dbReference type="Pfam" id="PF21257">
    <property type="entry name" value="PHD_ash2p_like"/>
    <property type="match status" value="1"/>
</dbReference>
<dbReference type="Pfam" id="PF00622">
    <property type="entry name" value="SPRY"/>
    <property type="match status" value="1"/>
</dbReference>
<dbReference type="SMART" id="SM00449">
    <property type="entry name" value="SPRY"/>
    <property type="match status" value="1"/>
</dbReference>
<dbReference type="SUPFAM" id="SSF49899">
    <property type="entry name" value="Concanavalin A-like lectins/glucanases"/>
    <property type="match status" value="1"/>
</dbReference>
<dbReference type="SUPFAM" id="SSF57903">
    <property type="entry name" value="FYVE/PHD zinc finger"/>
    <property type="match status" value="1"/>
</dbReference>
<dbReference type="PROSITE" id="PS50188">
    <property type="entry name" value="B302_SPRY"/>
    <property type="match status" value="1"/>
</dbReference>
<dbReference type="PROSITE" id="PS01359">
    <property type="entry name" value="ZF_PHD_1"/>
    <property type="match status" value="1"/>
</dbReference>
<accession>G5EFZ3</accession>
<protein>
    <recommendedName>
        <fullName>Set1/Ash2 histone methyltransferase complex subunit ash-2</fullName>
    </recommendedName>
</protein>
<name>ASH2_CAEEL</name>
<comment type="function">
    <text evidence="4 5 6 7 9">Component of the set-2/ash-2 histone methyltransferase (HMT) complex (Probable). Required for the di- and trimethylation at 'Lys-4' of histone H3, a mark associated with epigenetic transcriptional activation (PubMed:20555324, PubMed:21527717). Implicated in the epigenetic inheritance of lifespan over several generations (PubMed:22012258). Functions as a transcriptional regulator (PubMed:28379943). Acts in the germline to limit the longevity of the soma, probably by regulating a lipid metabolism pathway that signals from the germline to the intestine, thereby preventing accumulation of mono-unsaturated fatty acids (PubMed:20555324, PubMed:22012258, PubMed:28379943).</text>
</comment>
<comment type="subunit">
    <text evidence="8 10 11 12 13">Component of the SET2 complex (also known as the SET1/COMPASS complex), which contains at least set-2, swd-2.1, cfp-1, rbbp-5, wdr-5.1, dpy-30 and ash-2 (Probable) (PubMed:31602465). Within the complex, interacts with cfp-1 and wdr-5.1 (PubMed:31602465).</text>
</comment>
<comment type="subcellular location">
    <subcellularLocation>
        <location evidence="4">Nucleus</location>
    </subcellularLocation>
</comment>
<comment type="tissue specificity">
    <text evidence="4">Expressed in somatic and germline tissues (at protein level).</text>
</comment>
<comment type="developmental stage">
    <text evidence="4">Expressed throughout development and in adult animals.</text>
</comment>
<comment type="disruption phenotype">
    <text evidence="4 5 7">Decreased levels of tri- and dimethylated 'Lys-4' of histone H3 in the somatic cells in embryos and young adult animals (PubMed:20555324, PubMed:21527717). Increased dimethylated 'Lys-4' of histone H3 in primordial germ cells (PubMed:21527717). Decreased dimethylated 'Lys-4' of histone H3 in the distal region of the germline (PubMed:21527717). Reduced fertility (PubMed:21527717). RNAi-mediated knockdown results in the extension of lifespan (PubMed:20555324). Decreased levels of trimethylated 'Lys-4' of histone H3 in L3 stage larvae (PubMed:20555324). Leads to a deregulation of fat metabolism and to an accumulation of mono-unsaturated fatty acids in the intestine (PubMed:28379943).</text>
</comment>
<evidence type="ECO:0000255" key="1">
    <source>
        <dbReference type="PROSITE-ProRule" id="PRU00146"/>
    </source>
</evidence>
<evidence type="ECO:0000255" key="2">
    <source>
        <dbReference type="PROSITE-ProRule" id="PRU00548"/>
    </source>
</evidence>
<evidence type="ECO:0000256" key="3">
    <source>
        <dbReference type="SAM" id="MobiDB-lite"/>
    </source>
</evidence>
<evidence type="ECO:0000269" key="4">
    <source>
    </source>
</evidence>
<evidence type="ECO:0000269" key="5">
    <source>
    </source>
</evidence>
<evidence type="ECO:0000269" key="6">
    <source>
    </source>
</evidence>
<evidence type="ECO:0000269" key="7">
    <source>
    </source>
</evidence>
<evidence type="ECO:0000269" key="8">
    <source>
    </source>
</evidence>
<evidence type="ECO:0000305" key="9"/>
<evidence type="ECO:0000305" key="10">
    <source>
    </source>
</evidence>
<evidence type="ECO:0000305" key="11">
    <source>
    </source>
</evidence>
<evidence type="ECO:0000305" key="12">
    <source>
    </source>
</evidence>
<evidence type="ECO:0000305" key="13">
    <source>
    </source>
</evidence>
<evidence type="ECO:0000312" key="14">
    <source>
        <dbReference type="EMBL" id="ABW34919.1"/>
    </source>
</evidence>
<evidence type="ECO:0000312" key="15">
    <source>
        <dbReference type="Proteomes" id="UP000001940"/>
    </source>
</evidence>
<evidence type="ECO:0000312" key="16">
    <source>
        <dbReference type="WormBase" id="Y17G7B.2a"/>
    </source>
</evidence>
<feature type="chain" id="PRO_0000440618" description="Set1/Ash2 histone methyltransferase complex subunit ash-2">
    <location>
        <begin position="1"/>
        <end position="570"/>
    </location>
</feature>
<feature type="domain" description="B30.2/SPRY" evidence="2">
    <location>
        <begin position="270"/>
        <end position="468"/>
    </location>
</feature>
<feature type="zinc finger region" description="PHD-type" evidence="1">
    <location>
        <begin position="19"/>
        <end position="76"/>
    </location>
</feature>
<feature type="region of interest" description="Disordered" evidence="3">
    <location>
        <begin position="201"/>
        <end position="242"/>
    </location>
</feature>
<gene>
    <name evidence="16" type="primary">ash-2</name>
    <name evidence="16" type="ORF">Y17G7B.2</name>
</gene>
<reference evidence="14" key="1">
    <citation type="submission" date="2007-09" db="EMBL/GenBank/DDBJ databases">
        <title>The histone methyltransferase ash-2 controls Caenorhabditis elegans seam and vulva development.</title>
        <authorList>
            <person name="Soete G."/>
            <person name="Betist M.C."/>
            <person name="Korswagen H.C."/>
        </authorList>
    </citation>
    <scope>NUCLEOTIDE SEQUENCE [MRNA]</scope>
</reference>
<reference evidence="15" key="2">
    <citation type="journal article" date="1998" name="Science">
        <title>Genome sequence of the nematode C. elegans: a platform for investigating biology.</title>
        <authorList>
            <consortium name="The C. elegans sequencing consortium"/>
        </authorList>
    </citation>
    <scope>NUCLEOTIDE SEQUENCE [LARGE SCALE GENOMIC DNA]</scope>
    <source>
        <strain evidence="15">Bristol N2</strain>
    </source>
</reference>
<reference evidence="9" key="3">
    <citation type="journal article" date="2010" name="Nature">
        <title>Members of the H3K4 trimethylation complex regulate lifespan in a germline-dependent manner in C. elegans.</title>
        <authorList>
            <person name="Greer E.L."/>
            <person name="Maures T.J."/>
            <person name="Hauswirth A.G."/>
            <person name="Green E.M."/>
            <person name="Leeman D.S."/>
            <person name="Maro G.S."/>
            <person name="Han S."/>
            <person name="Banko M.R."/>
            <person name="Gozani O."/>
            <person name="Brunet A."/>
        </authorList>
    </citation>
    <scope>FUNCTION</scope>
    <scope>SUBCELLULAR LOCATION</scope>
    <scope>TISSUE SPECIFICITY</scope>
    <scope>DEVELOPMENTAL STAGE</scope>
    <scope>DISRUPTION PHENOTYPE</scope>
</reference>
<reference evidence="9" key="4">
    <citation type="journal article" date="2011" name="Nature">
        <title>Transgenerational epigenetic inheritance of longevity in Caenorhabditis elegans.</title>
        <authorList>
            <person name="Greer E.L."/>
            <person name="Maures T.J."/>
            <person name="Ucar D."/>
            <person name="Hauswirth A.G."/>
            <person name="Mancini E."/>
            <person name="Lim J.P."/>
            <person name="Benayoun B.A."/>
            <person name="Shi Y."/>
            <person name="Brunet A."/>
        </authorList>
    </citation>
    <scope>FUNCTION</scope>
</reference>
<reference evidence="9" key="5">
    <citation type="journal article" date="2011" name="Proc. Natl. Acad. Sci. U.S.A.">
        <title>Caenorhabditis elegans chromatin-associated proteins SET-2 and ASH-2 are differentially required for histone H3 Lys 4 methylation in embryos and adult germ cells.</title>
        <authorList>
            <person name="Xiao Y."/>
            <person name="Bedet C."/>
            <person name="Robert V.J."/>
            <person name="Simonet T."/>
            <person name="Dunkelbarger S."/>
            <person name="Rakotomalala C."/>
            <person name="Soete G."/>
            <person name="Korswagen H.C."/>
            <person name="Strome S."/>
            <person name="Palladino F."/>
        </authorList>
    </citation>
    <scope>FUNCTION</scope>
    <scope>DISRUPTION PHENOTYPE</scope>
</reference>
<reference evidence="9" key="6">
    <citation type="journal article" date="2017" name="Nature">
        <title>Mono-unsaturated fatty acids link H3K4me3 modifiers to C. elegans lifespan.</title>
        <authorList>
            <person name="Han S."/>
            <person name="Schroeder E.A."/>
            <person name="Silva-Garcia C.G."/>
            <person name="Hebestreit K."/>
            <person name="Mair W.B."/>
            <person name="Brunet A."/>
        </authorList>
    </citation>
    <scope>FUNCTION</scope>
    <scope>DISRUPTION PHENOTYPE</scope>
</reference>
<reference evidence="9" key="7">
    <citation type="journal article" date="2019" name="Nucleic Acids Res.">
        <title>Physical and functional interaction between SET1/COMPASS complex component CFP-1 and a Sin3S HDAC complex in C. elegans.</title>
        <authorList>
            <person name="Beurton F."/>
            <person name="Stempor P."/>
            <person name="Caron M."/>
            <person name="Appert A."/>
            <person name="Dong Y."/>
            <person name="Chen R.A."/>
            <person name="Cluet D."/>
            <person name="Coute Y."/>
            <person name="Herbette M."/>
            <person name="Huang N."/>
            <person name="Polveche H."/>
            <person name="Spichty M."/>
            <person name="Bedet C."/>
            <person name="Ahringer J."/>
            <person name="Palladino F."/>
        </authorList>
    </citation>
    <scope>IDENTIFICATION IN THE SET2 COMPLEX</scope>
    <scope>INTERACTION WITH CFP-1 AND WDR-5.1</scope>
    <scope>IDENTIFICATION BY MASS SPECTROMETRY</scope>
</reference>
<organism evidence="15">
    <name type="scientific">Caenorhabditis elegans</name>
    <dbReference type="NCBI Taxonomy" id="6239"/>
    <lineage>
        <taxon>Eukaryota</taxon>
        <taxon>Metazoa</taxon>
        <taxon>Ecdysozoa</taxon>
        <taxon>Nematoda</taxon>
        <taxon>Chromadorea</taxon>
        <taxon>Rhabditida</taxon>
        <taxon>Rhabditina</taxon>
        <taxon>Rhabditomorpha</taxon>
        <taxon>Rhabditoidea</taxon>
        <taxon>Rhabditidae</taxon>
        <taxon>Peloderinae</taxon>
        <taxon>Caenorhabditis</taxon>
    </lineage>
</organism>
<proteinExistence type="evidence at protein level"/>
<sequence length="570" mass="64496">MRSSKGGRGRQAAPKTAPTTVCYCDGKRELGSVEVVCSTCLKWFHGRCLKEFHELNSNGVPFMICYTFTCKQCRPTAEDWKAKKADLVQMCVTVLATLSAERLKADGKLSAEHVPEDFTYLSLKDEIVPYMNENWYMLTAIKQKKEWHQNLAPTLLKEKNIFVQHNDDDDLFALAEKNLSLLGPLHEAVKLIGKRPIERENREPRHIELPPIEGPKTRGASKRRHAEAPVTGKKQKLAADYSSTAAPNGVQIDIPFSKDNYRYYLTEVDPNVPEDPAWNQNQSSAYVIPSFHYRELLNPTVNVSSNDRAFQLSINGNSITGFEGYSMARASHGVSKGTWYFEVNFDDQPDDSHIRIGWSQSYASLQACVGYNKFSYGWRSKHGTKFHEAKGKKYHFGGFKQGDVLGCLIHLPVDKKLQIPANLPSEKYLPVSHKGFNLISFKANYFFEVQEESADIAKTLVEMPGSYIEFFHNGKSCGKAYENIYAGAYYPSISIFKSATATMNLGPKFRNLPRGATGIHARADEQQHEQTLSDMLYLVSKEVNLDHPPRVKREDDDDVKDIKKEIKQEI</sequence>